<gene>
    <name type="primary">TLG2B</name>
</gene>
<keyword id="KW-1015">Disulfide bond</keyword>
<keyword id="KW-0325">Glycoprotein</keyword>
<keyword id="KW-1199">Hemostasis impairing toxin</keyword>
<keyword id="KW-0378">Hydrolase</keyword>
<keyword id="KW-0645">Protease</keyword>
<keyword id="KW-0964">Secreted</keyword>
<keyword id="KW-0720">Serine protease</keyword>
<keyword id="KW-0732">Signal</keyword>
<keyword id="KW-0800">Toxin</keyword>
<keyword id="KW-0865">Zymogen</keyword>
<feature type="signal peptide" evidence="1">
    <location>
        <begin position="1"/>
        <end position="18"/>
    </location>
</feature>
<feature type="propeptide" id="PRO_0000028395" evidence="1">
    <location>
        <begin position="19"/>
        <end position="24"/>
    </location>
</feature>
<feature type="chain" id="PRO_0000028396" description="Snake venom serine protease 2B">
    <location>
        <begin position="25"/>
        <end position="260"/>
    </location>
</feature>
<feature type="domain" description="Peptidase S1" evidence="3">
    <location>
        <begin position="25"/>
        <end position="251"/>
    </location>
</feature>
<feature type="active site" description="Charge relay system" evidence="1">
    <location>
        <position position="67"/>
    </location>
</feature>
<feature type="active site" description="Charge relay system" evidence="1">
    <location>
        <position position="112"/>
    </location>
</feature>
<feature type="active site" description="Charge relay system" evidence="1">
    <location>
        <position position="206"/>
    </location>
</feature>
<feature type="glycosylation site" description="N-linked (GlcNAc...) asparagine" evidence="2">
    <location>
        <position position="101"/>
    </location>
</feature>
<feature type="glycosylation site" description="N-linked (GlcNAc...) asparagine" evidence="2">
    <location>
        <position position="105"/>
    </location>
</feature>
<feature type="glycosylation site" description="N-linked (GlcNAc...) asparagine" evidence="2">
    <location>
        <position position="123"/>
    </location>
</feature>
<feature type="glycosylation site" description="N-linked (GlcNAc...) asparagine" evidence="2">
    <location>
        <position position="156"/>
    </location>
</feature>
<feature type="disulfide bond" evidence="3">
    <location>
        <begin position="31"/>
        <end position="165"/>
    </location>
</feature>
<feature type="disulfide bond" evidence="3">
    <location>
        <begin position="52"/>
        <end position="68"/>
    </location>
</feature>
<feature type="disulfide bond" evidence="3">
    <location>
        <begin position="102"/>
        <end position="258"/>
    </location>
</feature>
<feature type="disulfide bond" evidence="3">
    <location>
        <begin position="144"/>
        <end position="212"/>
    </location>
</feature>
<feature type="disulfide bond" evidence="3">
    <location>
        <begin position="176"/>
        <end position="191"/>
    </location>
</feature>
<feature type="disulfide bond" evidence="3">
    <location>
        <begin position="202"/>
        <end position="227"/>
    </location>
</feature>
<proteinExistence type="evidence at transcript level"/>
<reference key="1">
    <citation type="journal article" date="1996" name="FEBS Lett.">
        <title>Accelerated evolution of crotalinae snake venom gland serine proteases.</title>
        <authorList>
            <person name="Deshimaru M."/>
            <person name="Ogawa T."/>
            <person name="Nakashima K."/>
            <person name="Nobuhisa I."/>
            <person name="Chijiwa T."/>
            <person name="Shimohigashi Y."/>
            <person name="Fukumaki Y."/>
            <person name="Niwa M."/>
            <person name="Yamashina I."/>
            <person name="Hattori S."/>
            <person name="Ohno M."/>
        </authorList>
    </citation>
    <scope>NUCLEOTIDE SEQUENCE [MRNA]</scope>
    <source>
        <tissue>Venom gland</tissue>
    </source>
</reference>
<organism>
    <name type="scientific">Craspedocephalus gramineus</name>
    <name type="common">Bamboo pit viper</name>
    <name type="synonym">Trimeresurus gramineus</name>
    <dbReference type="NCBI Taxonomy" id="8767"/>
    <lineage>
        <taxon>Eukaryota</taxon>
        <taxon>Metazoa</taxon>
        <taxon>Chordata</taxon>
        <taxon>Craniata</taxon>
        <taxon>Vertebrata</taxon>
        <taxon>Euteleostomi</taxon>
        <taxon>Lepidosauria</taxon>
        <taxon>Squamata</taxon>
        <taxon>Bifurcata</taxon>
        <taxon>Unidentata</taxon>
        <taxon>Episquamata</taxon>
        <taxon>Toxicofera</taxon>
        <taxon>Serpentes</taxon>
        <taxon>Colubroidea</taxon>
        <taxon>Viperidae</taxon>
        <taxon>Crotalinae</taxon>
        <taxon>Craspedocephalus</taxon>
    </lineage>
</organism>
<accession>O13061</accession>
<name>VSPB_CRAGM</name>
<evidence type="ECO:0000250" key="1"/>
<evidence type="ECO:0000255" key="2"/>
<evidence type="ECO:0000255" key="3">
    <source>
        <dbReference type="PROSITE-ProRule" id="PRU00274"/>
    </source>
</evidence>
<protein>
    <recommendedName>
        <fullName>Snake venom serine protease 2B</fullName>
        <shortName>SVSP 2B</shortName>
        <ecNumber>3.4.21.-</ecNumber>
    </recommendedName>
</protein>
<comment type="function">
    <text evidence="1">Snake venom serine protease that may act in the hemostasis system of the prey.</text>
</comment>
<comment type="subunit">
    <text evidence="1">Monomer.</text>
</comment>
<comment type="subcellular location">
    <subcellularLocation>
        <location>Secreted</location>
    </subcellularLocation>
</comment>
<comment type="tissue specificity">
    <text>Expressed by the venom gland.</text>
</comment>
<comment type="similarity">
    <text evidence="3">Belongs to the peptidase S1 family. Snake venom subfamily.</text>
</comment>
<sequence>MVLIRVLANLLILQLSYAQKSSELVVGGDECNINEHRFLVALYEYTSMTFICGGTLINQEWVLTAAHCDRDTIYIYIGMHDKYVKFDDEQGRHPKEKYIFNCSNNFTKWDKDIMLIKLDYPVNYSEHIAPLSLPSSPPSMGSVCRVMGWGAITPTNETLPDVPHCANINILDHALCRAVFPGLPATSRTLCAGVLQGGTDTCNRDSGGPLICNGQFQGIVFWGWYPCAQPRVPALYTKVFDHLDWIQSIIAGNTDAACPP</sequence>
<dbReference type="EC" id="3.4.21.-"/>
<dbReference type="EMBL" id="D67083">
    <property type="protein sequence ID" value="BAA19981.1"/>
    <property type="molecule type" value="mRNA"/>
</dbReference>
<dbReference type="SMR" id="O13061"/>
<dbReference type="MEROPS" id="S01.235"/>
<dbReference type="GlyCosmos" id="O13061">
    <property type="glycosylation" value="4 sites, No reported glycans"/>
</dbReference>
<dbReference type="GO" id="GO:0005576">
    <property type="term" value="C:extracellular region"/>
    <property type="evidence" value="ECO:0007669"/>
    <property type="project" value="UniProtKB-SubCell"/>
</dbReference>
<dbReference type="GO" id="GO:0030141">
    <property type="term" value="C:secretory granule"/>
    <property type="evidence" value="ECO:0007669"/>
    <property type="project" value="TreeGrafter"/>
</dbReference>
<dbReference type="GO" id="GO:0004252">
    <property type="term" value="F:serine-type endopeptidase activity"/>
    <property type="evidence" value="ECO:0007669"/>
    <property type="project" value="InterPro"/>
</dbReference>
<dbReference type="GO" id="GO:0090729">
    <property type="term" value="F:toxin activity"/>
    <property type="evidence" value="ECO:0007669"/>
    <property type="project" value="UniProtKB-KW"/>
</dbReference>
<dbReference type="GO" id="GO:0006508">
    <property type="term" value="P:proteolysis"/>
    <property type="evidence" value="ECO:0007669"/>
    <property type="project" value="UniProtKB-KW"/>
</dbReference>
<dbReference type="CDD" id="cd00190">
    <property type="entry name" value="Tryp_SPc"/>
    <property type="match status" value="1"/>
</dbReference>
<dbReference type="FunFam" id="2.40.10.10:FF:000158">
    <property type="entry name" value="Thrombin-like enzyme saxthrombin"/>
    <property type="match status" value="1"/>
</dbReference>
<dbReference type="Gene3D" id="2.40.10.10">
    <property type="entry name" value="Trypsin-like serine proteases"/>
    <property type="match status" value="2"/>
</dbReference>
<dbReference type="InterPro" id="IPR009003">
    <property type="entry name" value="Peptidase_S1_PA"/>
</dbReference>
<dbReference type="InterPro" id="IPR043504">
    <property type="entry name" value="Peptidase_S1_PA_chymotrypsin"/>
</dbReference>
<dbReference type="InterPro" id="IPR001314">
    <property type="entry name" value="Peptidase_S1A"/>
</dbReference>
<dbReference type="InterPro" id="IPR001254">
    <property type="entry name" value="Trypsin_dom"/>
</dbReference>
<dbReference type="InterPro" id="IPR018114">
    <property type="entry name" value="TRYPSIN_HIS"/>
</dbReference>
<dbReference type="PANTHER" id="PTHR24271:SF47">
    <property type="entry name" value="KALLIKREIN-1"/>
    <property type="match status" value="1"/>
</dbReference>
<dbReference type="PANTHER" id="PTHR24271">
    <property type="entry name" value="KALLIKREIN-RELATED"/>
    <property type="match status" value="1"/>
</dbReference>
<dbReference type="Pfam" id="PF00089">
    <property type="entry name" value="Trypsin"/>
    <property type="match status" value="1"/>
</dbReference>
<dbReference type="PRINTS" id="PR00722">
    <property type="entry name" value="CHYMOTRYPSIN"/>
</dbReference>
<dbReference type="SMART" id="SM00020">
    <property type="entry name" value="Tryp_SPc"/>
    <property type="match status" value="1"/>
</dbReference>
<dbReference type="SUPFAM" id="SSF50494">
    <property type="entry name" value="Trypsin-like serine proteases"/>
    <property type="match status" value="1"/>
</dbReference>
<dbReference type="PROSITE" id="PS50240">
    <property type="entry name" value="TRYPSIN_DOM"/>
    <property type="match status" value="1"/>
</dbReference>
<dbReference type="PROSITE" id="PS00134">
    <property type="entry name" value="TRYPSIN_HIS"/>
    <property type="match status" value="1"/>
</dbReference>